<keyword id="KW-0488">Methylation</keyword>
<keyword id="KW-0687">Ribonucleoprotein</keyword>
<keyword id="KW-0689">Ribosomal protein</keyword>
<keyword id="KW-0694">RNA-binding</keyword>
<keyword id="KW-0699">rRNA-binding</keyword>
<keyword id="KW-0820">tRNA-binding</keyword>
<organism>
    <name type="scientific">Chelativorans sp. (strain BNC1)</name>
    <dbReference type="NCBI Taxonomy" id="266779"/>
    <lineage>
        <taxon>Bacteria</taxon>
        <taxon>Pseudomonadati</taxon>
        <taxon>Pseudomonadota</taxon>
        <taxon>Alphaproteobacteria</taxon>
        <taxon>Hyphomicrobiales</taxon>
        <taxon>Phyllobacteriaceae</taxon>
        <taxon>Chelativorans</taxon>
    </lineage>
</organism>
<accession>Q11HP7</accession>
<gene>
    <name evidence="2" type="primary">rpsL</name>
    <name type="ordered locus">Meso_1683</name>
</gene>
<sequence length="123" mass="13793">MPTVNQLIAKPRKAPVKRNKVPAMEANPQKRGVCTRVYTTSPKKPNSAMRKVAKIRLANGFEVIGYIPGEGHNLQEHSVVMIRGGRVKDLPGVRYHIIRGVLDTQGVKSRKQRRSKYGAKRPK</sequence>
<proteinExistence type="inferred from homology"/>
<evidence type="ECO:0000250" key="1"/>
<evidence type="ECO:0000255" key="2">
    <source>
        <dbReference type="HAMAP-Rule" id="MF_00403"/>
    </source>
</evidence>
<evidence type="ECO:0000305" key="3"/>
<dbReference type="EMBL" id="CP000390">
    <property type="protein sequence ID" value="ABG63078.1"/>
    <property type="molecule type" value="Genomic_DNA"/>
</dbReference>
<dbReference type="SMR" id="Q11HP7"/>
<dbReference type="STRING" id="266779.Meso_1683"/>
<dbReference type="KEGG" id="mes:Meso_1683"/>
<dbReference type="eggNOG" id="COG0048">
    <property type="taxonomic scope" value="Bacteria"/>
</dbReference>
<dbReference type="HOGENOM" id="CLU_104295_1_2_5"/>
<dbReference type="OrthoDB" id="9802366at2"/>
<dbReference type="GO" id="GO:0015935">
    <property type="term" value="C:small ribosomal subunit"/>
    <property type="evidence" value="ECO:0007669"/>
    <property type="project" value="InterPro"/>
</dbReference>
<dbReference type="GO" id="GO:0019843">
    <property type="term" value="F:rRNA binding"/>
    <property type="evidence" value="ECO:0007669"/>
    <property type="project" value="UniProtKB-UniRule"/>
</dbReference>
<dbReference type="GO" id="GO:0003735">
    <property type="term" value="F:structural constituent of ribosome"/>
    <property type="evidence" value="ECO:0007669"/>
    <property type="project" value="InterPro"/>
</dbReference>
<dbReference type="GO" id="GO:0000049">
    <property type="term" value="F:tRNA binding"/>
    <property type="evidence" value="ECO:0007669"/>
    <property type="project" value="UniProtKB-UniRule"/>
</dbReference>
<dbReference type="GO" id="GO:0006412">
    <property type="term" value="P:translation"/>
    <property type="evidence" value="ECO:0007669"/>
    <property type="project" value="UniProtKB-UniRule"/>
</dbReference>
<dbReference type="CDD" id="cd03368">
    <property type="entry name" value="Ribosomal_S12"/>
    <property type="match status" value="1"/>
</dbReference>
<dbReference type="FunFam" id="2.40.50.140:FF:000001">
    <property type="entry name" value="30S ribosomal protein S12"/>
    <property type="match status" value="1"/>
</dbReference>
<dbReference type="Gene3D" id="2.40.50.140">
    <property type="entry name" value="Nucleic acid-binding proteins"/>
    <property type="match status" value="1"/>
</dbReference>
<dbReference type="HAMAP" id="MF_00403_B">
    <property type="entry name" value="Ribosomal_uS12_B"/>
    <property type="match status" value="1"/>
</dbReference>
<dbReference type="InterPro" id="IPR012340">
    <property type="entry name" value="NA-bd_OB-fold"/>
</dbReference>
<dbReference type="InterPro" id="IPR006032">
    <property type="entry name" value="Ribosomal_uS12"/>
</dbReference>
<dbReference type="InterPro" id="IPR005679">
    <property type="entry name" value="Ribosomal_uS12_bac"/>
</dbReference>
<dbReference type="NCBIfam" id="TIGR00981">
    <property type="entry name" value="rpsL_bact"/>
    <property type="match status" value="1"/>
</dbReference>
<dbReference type="PANTHER" id="PTHR11652">
    <property type="entry name" value="30S RIBOSOMAL PROTEIN S12 FAMILY MEMBER"/>
    <property type="match status" value="1"/>
</dbReference>
<dbReference type="Pfam" id="PF00164">
    <property type="entry name" value="Ribosom_S12_S23"/>
    <property type="match status" value="1"/>
</dbReference>
<dbReference type="PIRSF" id="PIRSF002133">
    <property type="entry name" value="Ribosomal_S12/S23"/>
    <property type="match status" value="1"/>
</dbReference>
<dbReference type="PRINTS" id="PR01034">
    <property type="entry name" value="RIBOSOMALS12"/>
</dbReference>
<dbReference type="SUPFAM" id="SSF50249">
    <property type="entry name" value="Nucleic acid-binding proteins"/>
    <property type="match status" value="1"/>
</dbReference>
<dbReference type="PROSITE" id="PS00055">
    <property type="entry name" value="RIBOSOMAL_S12"/>
    <property type="match status" value="1"/>
</dbReference>
<feature type="chain" id="PRO_0000263569" description="Small ribosomal subunit protein uS12">
    <location>
        <begin position="1"/>
        <end position="123"/>
    </location>
</feature>
<feature type="modified residue" description="3-methylthioaspartic acid" evidence="1">
    <location>
        <position position="89"/>
    </location>
</feature>
<reference key="1">
    <citation type="submission" date="2006-06" db="EMBL/GenBank/DDBJ databases">
        <title>Complete sequence of chromosome of Mesorhizobium sp. BNC1.</title>
        <authorList>
            <consortium name="US DOE Joint Genome Institute"/>
            <person name="Copeland A."/>
            <person name="Lucas S."/>
            <person name="Lapidus A."/>
            <person name="Barry K."/>
            <person name="Detter J.C."/>
            <person name="Glavina del Rio T."/>
            <person name="Hammon N."/>
            <person name="Israni S."/>
            <person name="Dalin E."/>
            <person name="Tice H."/>
            <person name="Pitluck S."/>
            <person name="Chertkov O."/>
            <person name="Brettin T."/>
            <person name="Bruce D."/>
            <person name="Han C."/>
            <person name="Tapia R."/>
            <person name="Gilna P."/>
            <person name="Schmutz J."/>
            <person name="Larimer F."/>
            <person name="Land M."/>
            <person name="Hauser L."/>
            <person name="Kyrpides N."/>
            <person name="Mikhailova N."/>
            <person name="Richardson P."/>
        </authorList>
    </citation>
    <scope>NUCLEOTIDE SEQUENCE [LARGE SCALE GENOMIC DNA]</scope>
    <source>
        <strain>BNC1</strain>
    </source>
</reference>
<comment type="function">
    <text evidence="2">With S4 and S5 plays an important role in translational accuracy.</text>
</comment>
<comment type="function">
    <text evidence="2">Interacts with and stabilizes bases of the 16S rRNA that are involved in tRNA selection in the A site and with the mRNA backbone. Located at the interface of the 30S and 50S subunits, it traverses the body of the 30S subunit contacting proteins on the other side and probably holding the rRNA structure together. The combined cluster of proteins S8, S12 and S17 appears to hold together the shoulder and platform of the 30S subunit.</text>
</comment>
<comment type="subunit">
    <text evidence="2">Part of the 30S ribosomal subunit. Contacts proteins S8 and S17. May interact with IF1 in the 30S initiation complex.</text>
</comment>
<comment type="similarity">
    <text evidence="2">Belongs to the universal ribosomal protein uS12 family.</text>
</comment>
<protein>
    <recommendedName>
        <fullName evidence="2">Small ribosomal subunit protein uS12</fullName>
    </recommendedName>
    <alternativeName>
        <fullName evidence="3">30S ribosomal protein S12</fullName>
    </alternativeName>
</protein>
<name>RS12_CHESB</name>